<name>MUKE_MANSM</name>
<gene>
    <name evidence="1" type="primary">mukE</name>
    <name type="ordered locus">MS1085</name>
</gene>
<organism>
    <name type="scientific">Mannheimia succiniciproducens (strain KCTC 0769BP / MBEL55E)</name>
    <dbReference type="NCBI Taxonomy" id="221988"/>
    <lineage>
        <taxon>Bacteria</taxon>
        <taxon>Pseudomonadati</taxon>
        <taxon>Pseudomonadota</taxon>
        <taxon>Gammaproteobacteria</taxon>
        <taxon>Pasteurellales</taxon>
        <taxon>Pasteurellaceae</taxon>
        <taxon>Basfia</taxon>
    </lineage>
</organism>
<dbReference type="EMBL" id="AE016827">
    <property type="protein sequence ID" value="AAU37692.1"/>
    <property type="molecule type" value="Genomic_DNA"/>
</dbReference>
<dbReference type="RefSeq" id="WP_011200260.1">
    <property type="nucleotide sequence ID" value="NC_006300.1"/>
</dbReference>
<dbReference type="SMR" id="Q65TL8"/>
<dbReference type="STRING" id="221988.MS1085"/>
<dbReference type="KEGG" id="msu:MS1085"/>
<dbReference type="eggNOG" id="COG3095">
    <property type="taxonomic scope" value="Bacteria"/>
</dbReference>
<dbReference type="HOGENOM" id="CLU_1146408_0_0_6"/>
<dbReference type="OrthoDB" id="6196648at2"/>
<dbReference type="Proteomes" id="UP000000607">
    <property type="component" value="Chromosome"/>
</dbReference>
<dbReference type="GO" id="GO:0005737">
    <property type="term" value="C:cytoplasm"/>
    <property type="evidence" value="ECO:0007669"/>
    <property type="project" value="UniProtKB-UniRule"/>
</dbReference>
<dbReference type="GO" id="GO:0009295">
    <property type="term" value="C:nucleoid"/>
    <property type="evidence" value="ECO:0007669"/>
    <property type="project" value="UniProtKB-SubCell"/>
</dbReference>
<dbReference type="GO" id="GO:0051301">
    <property type="term" value="P:cell division"/>
    <property type="evidence" value="ECO:0007669"/>
    <property type="project" value="UniProtKB-KW"/>
</dbReference>
<dbReference type="GO" id="GO:0030261">
    <property type="term" value="P:chromosome condensation"/>
    <property type="evidence" value="ECO:0007669"/>
    <property type="project" value="UniProtKB-KW"/>
</dbReference>
<dbReference type="GO" id="GO:0007059">
    <property type="term" value="P:chromosome segregation"/>
    <property type="evidence" value="ECO:0007669"/>
    <property type="project" value="UniProtKB-UniRule"/>
</dbReference>
<dbReference type="GO" id="GO:0006260">
    <property type="term" value="P:DNA replication"/>
    <property type="evidence" value="ECO:0007669"/>
    <property type="project" value="UniProtKB-UniRule"/>
</dbReference>
<dbReference type="Gene3D" id="1.10.10.2250">
    <property type="match status" value="1"/>
</dbReference>
<dbReference type="Gene3D" id="1.10.10.2260">
    <property type="entry name" value="MukE-like family, C-terminal domain"/>
    <property type="match status" value="1"/>
</dbReference>
<dbReference type="HAMAP" id="MF_01802">
    <property type="entry name" value="MukE"/>
    <property type="match status" value="1"/>
</dbReference>
<dbReference type="InterPro" id="IPR042037">
    <property type="entry name" value="MukE_C"/>
</dbReference>
<dbReference type="InterPro" id="IPR042038">
    <property type="entry name" value="MukE_N"/>
</dbReference>
<dbReference type="InterPro" id="IPR007385">
    <property type="entry name" value="Scp_MukE"/>
</dbReference>
<dbReference type="NCBIfam" id="NF003602">
    <property type="entry name" value="PRK05256.1"/>
    <property type="match status" value="1"/>
</dbReference>
<dbReference type="Pfam" id="PF04288">
    <property type="entry name" value="MukE"/>
    <property type="match status" value="1"/>
</dbReference>
<reference key="1">
    <citation type="journal article" date="2004" name="Nat. Biotechnol.">
        <title>The genome sequence of the capnophilic rumen bacterium Mannheimia succiniciproducens.</title>
        <authorList>
            <person name="Hong S.H."/>
            <person name="Kim J.S."/>
            <person name="Lee S.Y."/>
            <person name="In Y.H."/>
            <person name="Choi S.S."/>
            <person name="Rih J.-K."/>
            <person name="Kim C.H."/>
            <person name="Jeong H."/>
            <person name="Hur C.G."/>
            <person name="Kim J.J."/>
        </authorList>
    </citation>
    <scope>NUCLEOTIDE SEQUENCE [LARGE SCALE GENOMIC DNA]</scope>
    <source>
        <strain>KCTC 0769BP / MBEL55E</strain>
    </source>
</reference>
<accession>Q65TL8</accession>
<evidence type="ECO:0000255" key="1">
    <source>
        <dbReference type="HAMAP-Rule" id="MF_01802"/>
    </source>
</evidence>
<evidence type="ECO:0000256" key="2">
    <source>
        <dbReference type="SAM" id="MobiDB-lite"/>
    </source>
</evidence>
<keyword id="KW-0131">Cell cycle</keyword>
<keyword id="KW-0132">Cell division</keyword>
<keyword id="KW-0159">Chromosome partition</keyword>
<keyword id="KW-0963">Cytoplasm</keyword>
<keyword id="KW-0226">DNA condensation</keyword>
<sequence length="241" mass="27204">MNENLQELIPTKLAAAIANPLFPAVDSQLRSGRHIGQEYLDNFAFLADFQNELDMFYRRYNVELIRAPEGFFYLRPKATTLIARSVLSELEMLVGKVLCYLYLSPERLAQQGIFSVQEVYDELLNLADESKLLKAVNQRSSGSDLDKQKLAEKVRAAVNRLRRLGMIHTVGEQNSGKFTISESVFRFGAEVRSGDDPREAQLRLIRDGEAATPDSLSQEKSAVKNDEEIEDELDEGLGEEE</sequence>
<comment type="function">
    <text evidence="1">Involved in chromosome condensation, segregation and cell cycle progression. May participate in facilitating chromosome segregation by condensation DNA from both sides of a centrally located replisome during cell division. Probably acts via its interaction with MukB and MukF.</text>
</comment>
<comment type="subunit">
    <text evidence="1">Interacts, and probably forms a ternary complex, with MukF and MukB. The complex formation is stimulated by calcium or magnesium.</text>
</comment>
<comment type="subcellular location">
    <subcellularLocation>
        <location evidence="1">Cytoplasm</location>
        <location evidence="1">Nucleoid</location>
    </subcellularLocation>
    <text evidence="1">Restricted to the nucleoid region.</text>
</comment>
<comment type="similarity">
    <text evidence="1">Belongs to the MukE family.</text>
</comment>
<protein>
    <recommendedName>
        <fullName evidence="1">Chromosome partition protein MukE</fullName>
    </recommendedName>
</protein>
<feature type="chain" id="PRO_1000069923" description="Chromosome partition protein MukE">
    <location>
        <begin position="1"/>
        <end position="241"/>
    </location>
</feature>
<feature type="region of interest" description="Disordered" evidence="2">
    <location>
        <begin position="207"/>
        <end position="241"/>
    </location>
</feature>
<feature type="compositionally biased region" description="Acidic residues" evidence="2">
    <location>
        <begin position="227"/>
        <end position="241"/>
    </location>
</feature>
<proteinExistence type="inferred from homology"/>